<sequence>MRGARLMGALLALAGLLQGALALRMAAFNIRTFGETKMSNATLSKYIVQILSRYDVAVVQEVRDSHLTAVGKLLDTLNQDDPNAYHYVVSEPLGRSSYKERYLFLFRPDRVSVLDSYQYDDGCEPCGNDTFSREPAIVRFHSPLTEVKEFAVVPLHAAPLDAVAEIDALYDVYLDVQHKWDLEDIVLMGDFNAGCSYVAASQWSSIRLRTNPAFQWLIPDTADTTSTSTHCAYDRIVVAGSQLQHAVVPESAAPFNFQVAYGLSSQLAQAISDHYPVEVTLKRA</sequence>
<organism>
    <name type="scientific">Canis lupus familiaris</name>
    <name type="common">Dog</name>
    <name type="synonym">Canis familiaris</name>
    <dbReference type="NCBI Taxonomy" id="9615"/>
    <lineage>
        <taxon>Eukaryota</taxon>
        <taxon>Metazoa</taxon>
        <taxon>Chordata</taxon>
        <taxon>Craniata</taxon>
        <taxon>Vertebrata</taxon>
        <taxon>Euteleostomi</taxon>
        <taxon>Mammalia</taxon>
        <taxon>Eutheria</taxon>
        <taxon>Laurasiatheria</taxon>
        <taxon>Carnivora</taxon>
        <taxon>Caniformia</taxon>
        <taxon>Canidae</taxon>
        <taxon>Canis</taxon>
    </lineage>
</organism>
<keyword id="KW-0009">Actin-binding</keyword>
<keyword id="KW-0053">Apoptosis</keyword>
<keyword id="KW-0106">Calcium</keyword>
<keyword id="KW-0968">Cytoplasmic vesicle</keyword>
<keyword id="KW-1015">Disulfide bond</keyword>
<keyword id="KW-0255">Endonuclease</keyword>
<keyword id="KW-0325">Glycoprotein</keyword>
<keyword id="KW-0378">Hydrolase</keyword>
<keyword id="KW-0540">Nuclease</keyword>
<keyword id="KW-0539">Nucleus</keyword>
<keyword id="KW-1185">Reference proteome</keyword>
<keyword id="KW-0964">Secreted</keyword>
<keyword id="KW-0732">Signal</keyword>
<name>DNAS1_CANLF</name>
<gene>
    <name type="primary">DNASE1</name>
</gene>
<feature type="signal peptide" evidence="1">
    <location>
        <begin position="1"/>
        <end position="22"/>
    </location>
</feature>
<feature type="chain" id="PRO_0000007276" description="Deoxyribonuclease-1">
    <location>
        <begin position="23"/>
        <end position="284"/>
    </location>
</feature>
<feature type="active site" evidence="1">
    <location>
        <position position="100"/>
    </location>
</feature>
<feature type="active site" evidence="1">
    <location>
        <position position="156"/>
    </location>
</feature>
<feature type="site" description="Involved in actin-binding" evidence="1">
    <location>
        <position position="35"/>
    </location>
</feature>
<feature type="site" description="Nitration by tetranitromethane destroys a Ca(2+) binding site and inactivates enzyme" evidence="1">
    <location>
        <position position="87"/>
    </location>
</feature>
<feature type="site" description="Involved in actin-binding" evidence="1">
    <location>
        <position position="89"/>
    </location>
</feature>
<feature type="glycosylation site" description="N-linked (GlcNAc...) asparagine" evidence="5">
    <location>
        <position position="40"/>
    </location>
</feature>
<feature type="glycosylation site" description="N-linked (GlcNAc...) asparagine" evidence="5">
    <location>
        <position position="128"/>
    </location>
</feature>
<feature type="disulfide bond" evidence="1">
    <location>
        <begin position="123"/>
        <end position="126"/>
    </location>
</feature>
<feature type="disulfide bond" description="Essential for enzymatic activity" evidence="1">
    <location>
        <begin position="195"/>
        <end position="231"/>
    </location>
</feature>
<proteinExistence type="evidence at protein level"/>
<dbReference type="EC" id="3.1.21.1" evidence="3"/>
<dbReference type="EMBL" id="AB113380">
    <property type="protein sequence ID" value="BAD06000.1"/>
    <property type="molecule type" value="mRNA"/>
</dbReference>
<dbReference type="RefSeq" id="NP_001002946.1">
    <property type="nucleotide sequence ID" value="NM_001002946.1"/>
</dbReference>
<dbReference type="SMR" id="Q767J3"/>
<dbReference type="FunCoup" id="Q767J3">
    <property type="interactions" value="6"/>
</dbReference>
<dbReference type="STRING" id="9615.ENSCAFP00000054576"/>
<dbReference type="GlyCosmos" id="Q767J3">
    <property type="glycosylation" value="2 sites, No reported glycans"/>
</dbReference>
<dbReference type="PaxDb" id="9612-ENSCAFP00000028424"/>
<dbReference type="Ensembl" id="ENSCAFT00000093753.2">
    <property type="protein sequence ID" value="ENSCAFP00000054576.2"/>
    <property type="gene ID" value="ENSCAFG00000019267.5"/>
</dbReference>
<dbReference type="Ensembl" id="ENSCAFT00030005956.1">
    <property type="protein sequence ID" value="ENSCAFP00030005264.1"/>
    <property type="gene ID" value="ENSCAFG00030003196.1"/>
</dbReference>
<dbReference type="Ensembl" id="ENSCAFT00845003514.1">
    <property type="protein sequence ID" value="ENSCAFP00845002788.1"/>
    <property type="gene ID" value="ENSCAFG00845002013.1"/>
</dbReference>
<dbReference type="GeneID" id="403413"/>
<dbReference type="KEGG" id="cfa:403413"/>
<dbReference type="CTD" id="1773"/>
<dbReference type="VEuPathDB" id="HostDB:ENSCAFG00845002013"/>
<dbReference type="VGNC" id="VGNC:40023">
    <property type="gene designation" value="DNASE1"/>
</dbReference>
<dbReference type="eggNOG" id="ENOG502QQFT">
    <property type="taxonomic scope" value="Eukaryota"/>
</dbReference>
<dbReference type="GeneTree" id="ENSGT00950000182846"/>
<dbReference type="HOGENOM" id="CLU_043335_2_1_1"/>
<dbReference type="InParanoid" id="Q767J3"/>
<dbReference type="OMA" id="YHFVVSE"/>
<dbReference type="OrthoDB" id="16835at33554"/>
<dbReference type="TreeFam" id="TF329541"/>
<dbReference type="BRENDA" id="3.1.21.1">
    <property type="organism ID" value="1153"/>
</dbReference>
<dbReference type="Proteomes" id="UP000002254">
    <property type="component" value="Chromosome 6"/>
</dbReference>
<dbReference type="Proteomes" id="UP000694429">
    <property type="component" value="Chromosome 6"/>
</dbReference>
<dbReference type="Proteomes" id="UP000694542">
    <property type="component" value="Unplaced"/>
</dbReference>
<dbReference type="Proteomes" id="UP000805418">
    <property type="component" value="Chromosome 6"/>
</dbReference>
<dbReference type="GO" id="GO:0005576">
    <property type="term" value="C:extracellular region"/>
    <property type="evidence" value="ECO:0007669"/>
    <property type="project" value="UniProtKB-SubCell"/>
</dbReference>
<dbReference type="GO" id="GO:0005635">
    <property type="term" value="C:nuclear envelope"/>
    <property type="evidence" value="ECO:0007669"/>
    <property type="project" value="UniProtKB-SubCell"/>
</dbReference>
<dbReference type="GO" id="GO:0042588">
    <property type="term" value="C:zymogen granule"/>
    <property type="evidence" value="ECO:0007669"/>
    <property type="project" value="UniProtKB-SubCell"/>
</dbReference>
<dbReference type="GO" id="GO:0003779">
    <property type="term" value="F:actin binding"/>
    <property type="evidence" value="ECO:0007669"/>
    <property type="project" value="UniProtKB-KW"/>
</dbReference>
<dbReference type="GO" id="GO:0004530">
    <property type="term" value="F:deoxyribonuclease I activity"/>
    <property type="evidence" value="ECO:0007669"/>
    <property type="project" value="UniProtKB-EC"/>
</dbReference>
<dbReference type="GO" id="GO:0006915">
    <property type="term" value="P:apoptotic process"/>
    <property type="evidence" value="ECO:0007669"/>
    <property type="project" value="UniProtKB-KW"/>
</dbReference>
<dbReference type="GO" id="GO:0006308">
    <property type="term" value="P:DNA catabolic process"/>
    <property type="evidence" value="ECO:0000250"/>
    <property type="project" value="UniProtKB"/>
</dbReference>
<dbReference type="GO" id="GO:0002283">
    <property type="term" value="P:neutrophil activation involved in immune response"/>
    <property type="evidence" value="ECO:0000250"/>
    <property type="project" value="UniProtKB"/>
</dbReference>
<dbReference type="GO" id="GO:0002673">
    <property type="term" value="P:regulation of acute inflammatory response"/>
    <property type="evidence" value="ECO:0000250"/>
    <property type="project" value="UniProtKB"/>
</dbReference>
<dbReference type="GO" id="GO:0070948">
    <property type="term" value="P:regulation of neutrophil mediated cytotoxicity"/>
    <property type="evidence" value="ECO:0000250"/>
    <property type="project" value="UniProtKB"/>
</dbReference>
<dbReference type="CDD" id="cd10282">
    <property type="entry name" value="DNase1"/>
    <property type="match status" value="1"/>
</dbReference>
<dbReference type="FunFam" id="3.60.10.10:FF:000035">
    <property type="entry name" value="Deoxyribonuclease"/>
    <property type="match status" value="1"/>
</dbReference>
<dbReference type="Gene3D" id="3.60.10.10">
    <property type="entry name" value="Endonuclease/exonuclease/phosphatase"/>
    <property type="match status" value="1"/>
</dbReference>
<dbReference type="InterPro" id="IPR018057">
    <property type="entry name" value="Deoxyribonuclease-1_AS"/>
</dbReference>
<dbReference type="InterPro" id="IPR016202">
    <property type="entry name" value="DNase_I"/>
</dbReference>
<dbReference type="InterPro" id="IPR033125">
    <property type="entry name" value="DNASE_I_2"/>
</dbReference>
<dbReference type="InterPro" id="IPR036691">
    <property type="entry name" value="Endo/exonu/phosph_ase_sf"/>
</dbReference>
<dbReference type="InterPro" id="IPR005135">
    <property type="entry name" value="Endo/exonuclease/phosphatase"/>
</dbReference>
<dbReference type="PANTHER" id="PTHR11371">
    <property type="entry name" value="DEOXYRIBONUCLEASE"/>
    <property type="match status" value="1"/>
</dbReference>
<dbReference type="PANTHER" id="PTHR11371:SF27">
    <property type="entry name" value="DEOXYRIBONUCLEASE-1"/>
    <property type="match status" value="1"/>
</dbReference>
<dbReference type="Pfam" id="PF03372">
    <property type="entry name" value="Exo_endo_phos"/>
    <property type="match status" value="1"/>
</dbReference>
<dbReference type="PIRSF" id="PIRSF000988">
    <property type="entry name" value="DNase_I_euk"/>
    <property type="match status" value="1"/>
</dbReference>
<dbReference type="PRINTS" id="PR00130">
    <property type="entry name" value="DNASEI"/>
</dbReference>
<dbReference type="SMART" id="SM00476">
    <property type="entry name" value="DNaseIc"/>
    <property type="match status" value="1"/>
</dbReference>
<dbReference type="SUPFAM" id="SSF56219">
    <property type="entry name" value="DNase I-like"/>
    <property type="match status" value="1"/>
</dbReference>
<dbReference type="PROSITE" id="PS00919">
    <property type="entry name" value="DNASE_I_1"/>
    <property type="match status" value="1"/>
</dbReference>
<dbReference type="PROSITE" id="PS00918">
    <property type="entry name" value="DNASE_I_2"/>
    <property type="match status" value="1"/>
</dbReference>
<protein>
    <recommendedName>
        <fullName>Deoxyribonuclease-1</fullName>
        <ecNumber evidence="3">3.1.21.1</ecNumber>
    </recommendedName>
    <alternativeName>
        <fullName>Deoxyribonuclease I</fullName>
        <shortName>DNase I</shortName>
    </alternativeName>
</protein>
<evidence type="ECO:0000250" key="1">
    <source>
        <dbReference type="UniProtKB" id="P00639"/>
    </source>
</evidence>
<evidence type="ECO:0000250" key="2">
    <source>
        <dbReference type="UniProtKB" id="P21704"/>
    </source>
</evidence>
<evidence type="ECO:0000250" key="3">
    <source>
        <dbReference type="UniProtKB" id="P24855"/>
    </source>
</evidence>
<evidence type="ECO:0000250" key="4">
    <source>
        <dbReference type="UniProtKB" id="P49183"/>
    </source>
</evidence>
<evidence type="ECO:0000255" key="5"/>
<evidence type="ECO:0000269" key="6">
    <source>
    </source>
</evidence>
<evidence type="ECO:0000305" key="7"/>
<accession>Q767J3</accession>
<reference key="1">
    <citation type="journal article" date="2003" name="J. Biochem.">
        <title>Molecular, biochemical and immunological analyses of canine pancreatic DNase I.</title>
        <authorList>
            <person name="Kaneko Y."/>
            <person name="Takeshita H."/>
            <person name="Mogi K."/>
            <person name="Nakajima T."/>
            <person name="Yasuda T."/>
            <person name="Itoi M."/>
            <person name="Kuwano H."/>
            <person name="Kishi K."/>
        </authorList>
    </citation>
    <scope>NUCLEOTIDE SEQUENCE [MRNA]</scope>
    <scope>FUNCTION</scope>
    <scope>INTERACTION WITH ACTIN</scope>
    <scope>TISSUE SPECIFICITY</scope>
    <source>
        <tissue>Pancreas</tissue>
    </source>
</reference>
<comment type="function">
    <text evidence="2 4 6">Serum endocuclease secreted into body fluids by a wide variety of exocrine and endocrine organs (PubMed:14688237). Expressed by non-hematopoietic tissues and preferentially cleaves protein-free DNA (By similarity). Among other functions, seems to be involved in cell death by apoptosis (PubMed:14688237). Binds specifically to G-actin and blocks actin polymerization (PubMed:14688237). Together with DNASE1L3, plays a key role in degrading neutrophil extracellular traps (NETs) (By similarity). NETs are mainly composed of DNA fibers and are released by neutrophils to bind pathogens during inflammation (By similarity). Degradation of intravascular NETs by DNASE1 and DNASE1L3 is required to prevent formation of clots that obstruct blood vessels and cause organ damage following inflammation (By similarity).</text>
</comment>
<comment type="catalytic activity">
    <reaction evidence="3">
        <text>Endonucleolytic cleavage to 5'-phosphodinucleotide and 5'-phosphooligonucleotide end-products.</text>
        <dbReference type="EC" id="3.1.21.1"/>
    </reaction>
</comment>
<comment type="cofactor">
    <cofactor evidence="3">
        <name>Ca(2+)</name>
        <dbReference type="ChEBI" id="CHEBI:29108"/>
    </cofactor>
    <cofactor evidence="3">
        <name>Mg(2+)</name>
        <dbReference type="ChEBI" id="CHEBI:18420"/>
    </cofactor>
    <text evidence="3">Divalent metal cations. Prefers Ca(2+) or Mg(2+).</text>
</comment>
<comment type="subcellular location">
    <subcellularLocation>
        <location evidence="3">Secreted</location>
    </subcellularLocation>
    <subcellularLocation>
        <location evidence="3">Zymogen granule</location>
    </subcellularLocation>
    <subcellularLocation>
        <location evidence="3">Nucleus envelope</location>
    </subcellularLocation>
    <text evidence="3">Secretory protein, stored in zymogen granules and found in the nuclear envelope.</text>
</comment>
<comment type="tissue specificity">
    <text evidence="6">Highest expression in pancreas.</text>
</comment>
<comment type="similarity">
    <text evidence="7">Belongs to the DNase I family.</text>
</comment>